<gene>
    <name type="ordered locus">Tpet_1236</name>
</gene>
<keyword id="KW-0963">Cytoplasm</keyword>
<keyword id="KW-0378">Hydrolase</keyword>
<keyword id="KW-0546">Nucleotide metabolism</keyword>
<evidence type="ECO:0000255" key="1">
    <source>
        <dbReference type="HAMAP-Rule" id="MF_00528"/>
    </source>
</evidence>
<sequence>MRIILASSSPRRRQLMELLGIEFEVEKPDVEEEFLESPEETVRELSLRKAEWVFKKRKEEEILVIGSDTVVVLDGNILGKPESLEEAKGMLKKLSGEWHVVYTGVAFVSSETKDVIVSSTKVRFRELPESVIDYYVEKYRPLDKAGAYGIQDFAAVFVEKIEGDFFTVVGFPLGMVWQYLYEKGWWKFASKREDDKGGARVAFG</sequence>
<comment type="function">
    <text evidence="1">Nucleoside triphosphate pyrophosphatase that hydrolyzes dTTP and UTP. May have a dual role in cell division arrest and in preventing the incorporation of modified nucleotides into cellular nucleic acids.</text>
</comment>
<comment type="catalytic activity">
    <reaction evidence="1">
        <text>dTTP + H2O = dTMP + diphosphate + H(+)</text>
        <dbReference type="Rhea" id="RHEA:28534"/>
        <dbReference type="ChEBI" id="CHEBI:15377"/>
        <dbReference type="ChEBI" id="CHEBI:15378"/>
        <dbReference type="ChEBI" id="CHEBI:33019"/>
        <dbReference type="ChEBI" id="CHEBI:37568"/>
        <dbReference type="ChEBI" id="CHEBI:63528"/>
        <dbReference type="EC" id="3.6.1.9"/>
    </reaction>
</comment>
<comment type="catalytic activity">
    <reaction evidence="1">
        <text>UTP + H2O = UMP + diphosphate + H(+)</text>
        <dbReference type="Rhea" id="RHEA:29395"/>
        <dbReference type="ChEBI" id="CHEBI:15377"/>
        <dbReference type="ChEBI" id="CHEBI:15378"/>
        <dbReference type="ChEBI" id="CHEBI:33019"/>
        <dbReference type="ChEBI" id="CHEBI:46398"/>
        <dbReference type="ChEBI" id="CHEBI:57865"/>
        <dbReference type="EC" id="3.6.1.9"/>
    </reaction>
</comment>
<comment type="cofactor">
    <cofactor evidence="1">
        <name>a divalent metal cation</name>
        <dbReference type="ChEBI" id="CHEBI:60240"/>
    </cofactor>
</comment>
<comment type="subcellular location">
    <subcellularLocation>
        <location evidence="1">Cytoplasm</location>
    </subcellularLocation>
</comment>
<comment type="similarity">
    <text evidence="1">Belongs to the Maf family. YhdE subfamily.</text>
</comment>
<accession>A5IM27</accession>
<organism>
    <name type="scientific">Thermotoga petrophila (strain ATCC BAA-488 / DSM 13995 / JCM 10881 / RKU-1)</name>
    <dbReference type="NCBI Taxonomy" id="390874"/>
    <lineage>
        <taxon>Bacteria</taxon>
        <taxon>Thermotogati</taxon>
        <taxon>Thermotogota</taxon>
        <taxon>Thermotogae</taxon>
        <taxon>Thermotogales</taxon>
        <taxon>Thermotogaceae</taxon>
        <taxon>Thermotoga</taxon>
    </lineage>
</organism>
<reference key="1">
    <citation type="submission" date="2007-05" db="EMBL/GenBank/DDBJ databases">
        <title>Complete sequence of Thermotoga petrophila RKU-1.</title>
        <authorList>
            <consortium name="US DOE Joint Genome Institute"/>
            <person name="Copeland A."/>
            <person name="Lucas S."/>
            <person name="Lapidus A."/>
            <person name="Barry K."/>
            <person name="Glavina del Rio T."/>
            <person name="Dalin E."/>
            <person name="Tice H."/>
            <person name="Pitluck S."/>
            <person name="Sims D."/>
            <person name="Brettin T."/>
            <person name="Bruce D."/>
            <person name="Detter J.C."/>
            <person name="Han C."/>
            <person name="Tapia R."/>
            <person name="Schmutz J."/>
            <person name="Larimer F."/>
            <person name="Land M."/>
            <person name="Hauser L."/>
            <person name="Kyrpides N."/>
            <person name="Mikhailova N."/>
            <person name="Nelson K."/>
            <person name="Gogarten J.P."/>
            <person name="Noll K."/>
            <person name="Richardson P."/>
        </authorList>
    </citation>
    <scope>NUCLEOTIDE SEQUENCE [LARGE SCALE GENOMIC DNA]</scope>
    <source>
        <strain>ATCC BAA-488 / DSM 13995 / JCM 10881 / RKU-1</strain>
    </source>
</reference>
<proteinExistence type="inferred from homology"/>
<feature type="chain" id="PRO_1000060966" description="dTTP/UTP pyrophosphatase">
    <location>
        <begin position="1"/>
        <end position="204"/>
    </location>
</feature>
<feature type="active site" description="Proton acceptor" evidence="1">
    <location>
        <position position="68"/>
    </location>
</feature>
<feature type="site" description="Important for substrate specificity" evidence="1">
    <location>
        <position position="11"/>
    </location>
</feature>
<feature type="site" description="Important for substrate specificity" evidence="1">
    <location>
        <position position="69"/>
    </location>
</feature>
<feature type="site" description="Important for substrate specificity" evidence="1">
    <location>
        <position position="151"/>
    </location>
</feature>
<name>NTPPA_THEP1</name>
<protein>
    <recommendedName>
        <fullName evidence="1">dTTP/UTP pyrophosphatase</fullName>
        <shortName evidence="1">dTTPase/UTPase</shortName>
        <ecNumber evidence="1">3.6.1.9</ecNumber>
    </recommendedName>
    <alternativeName>
        <fullName evidence="1">Nucleoside triphosphate pyrophosphatase</fullName>
    </alternativeName>
    <alternativeName>
        <fullName evidence="1">Nucleotide pyrophosphatase</fullName>
        <shortName evidence="1">Nucleotide PPase</shortName>
    </alternativeName>
</protein>
<dbReference type="EC" id="3.6.1.9" evidence="1"/>
<dbReference type="EMBL" id="CP000702">
    <property type="protein sequence ID" value="ABQ47250.1"/>
    <property type="molecule type" value="Genomic_DNA"/>
</dbReference>
<dbReference type="RefSeq" id="WP_011943740.1">
    <property type="nucleotide sequence ID" value="NC_009486.1"/>
</dbReference>
<dbReference type="SMR" id="A5IM27"/>
<dbReference type="STRING" id="390874.Tpet_1236"/>
<dbReference type="KEGG" id="tpt:Tpet_1236"/>
<dbReference type="eggNOG" id="COG0424">
    <property type="taxonomic scope" value="Bacteria"/>
</dbReference>
<dbReference type="HOGENOM" id="CLU_040416_0_0_0"/>
<dbReference type="Proteomes" id="UP000006558">
    <property type="component" value="Chromosome"/>
</dbReference>
<dbReference type="GO" id="GO:0005737">
    <property type="term" value="C:cytoplasm"/>
    <property type="evidence" value="ECO:0007669"/>
    <property type="project" value="UniProtKB-SubCell"/>
</dbReference>
<dbReference type="GO" id="GO:0036218">
    <property type="term" value="F:dTTP diphosphatase activity"/>
    <property type="evidence" value="ECO:0007669"/>
    <property type="project" value="RHEA"/>
</dbReference>
<dbReference type="GO" id="GO:0036221">
    <property type="term" value="F:UTP diphosphatase activity"/>
    <property type="evidence" value="ECO:0007669"/>
    <property type="project" value="RHEA"/>
</dbReference>
<dbReference type="GO" id="GO:0009117">
    <property type="term" value="P:nucleotide metabolic process"/>
    <property type="evidence" value="ECO:0007669"/>
    <property type="project" value="UniProtKB-KW"/>
</dbReference>
<dbReference type="CDD" id="cd00555">
    <property type="entry name" value="Maf"/>
    <property type="match status" value="1"/>
</dbReference>
<dbReference type="FunFam" id="3.90.950.10:FF:000005">
    <property type="entry name" value="7-methyl-GTP pyrophosphatase"/>
    <property type="match status" value="1"/>
</dbReference>
<dbReference type="Gene3D" id="3.90.950.10">
    <property type="match status" value="1"/>
</dbReference>
<dbReference type="HAMAP" id="MF_00528">
    <property type="entry name" value="Maf"/>
    <property type="match status" value="1"/>
</dbReference>
<dbReference type="InterPro" id="IPR029001">
    <property type="entry name" value="ITPase-like_fam"/>
</dbReference>
<dbReference type="InterPro" id="IPR003697">
    <property type="entry name" value="Maf-like"/>
</dbReference>
<dbReference type="NCBIfam" id="TIGR00172">
    <property type="entry name" value="maf"/>
    <property type="match status" value="1"/>
</dbReference>
<dbReference type="NCBIfam" id="NF010943">
    <property type="entry name" value="PRK14363.1"/>
    <property type="match status" value="1"/>
</dbReference>
<dbReference type="PANTHER" id="PTHR43213">
    <property type="entry name" value="BIFUNCTIONAL DTTP/UTP PYROPHOSPHATASE/METHYLTRANSFERASE PROTEIN-RELATED"/>
    <property type="match status" value="1"/>
</dbReference>
<dbReference type="PANTHER" id="PTHR43213:SF5">
    <property type="entry name" value="BIFUNCTIONAL DTTP_UTP PYROPHOSPHATASE_METHYLTRANSFERASE PROTEIN-RELATED"/>
    <property type="match status" value="1"/>
</dbReference>
<dbReference type="Pfam" id="PF02545">
    <property type="entry name" value="Maf"/>
    <property type="match status" value="1"/>
</dbReference>
<dbReference type="PIRSF" id="PIRSF006305">
    <property type="entry name" value="Maf"/>
    <property type="match status" value="1"/>
</dbReference>
<dbReference type="SUPFAM" id="SSF52972">
    <property type="entry name" value="ITPase-like"/>
    <property type="match status" value="1"/>
</dbReference>